<reference key="1">
    <citation type="journal article" date="2010" name="J. Bacteriol.">
        <title>The genetic basis of laboratory adaptation in Caulobacter crescentus.</title>
        <authorList>
            <person name="Marks M.E."/>
            <person name="Castro-Rojas C.M."/>
            <person name="Teiling C."/>
            <person name="Du L."/>
            <person name="Kapatral V."/>
            <person name="Walunas T.L."/>
            <person name="Crosson S."/>
        </authorList>
    </citation>
    <scope>NUCLEOTIDE SEQUENCE [LARGE SCALE GENOMIC DNA]</scope>
    <source>
        <strain>NA1000 / CB15N</strain>
    </source>
</reference>
<comment type="function">
    <text evidence="1">Catalyzes the conversion of (8S)-3',8-cyclo-7,8-dihydroguanosine 5'-triphosphate to cyclic pyranopterin monophosphate (cPMP).</text>
</comment>
<comment type="catalytic activity">
    <reaction evidence="1">
        <text>(8S)-3',8-cyclo-7,8-dihydroguanosine 5'-triphosphate = cyclic pyranopterin phosphate + diphosphate</text>
        <dbReference type="Rhea" id="RHEA:49580"/>
        <dbReference type="ChEBI" id="CHEBI:33019"/>
        <dbReference type="ChEBI" id="CHEBI:59648"/>
        <dbReference type="ChEBI" id="CHEBI:131766"/>
        <dbReference type="EC" id="4.6.1.17"/>
    </reaction>
</comment>
<comment type="pathway">
    <text evidence="1">Cofactor biosynthesis; molybdopterin biosynthesis.</text>
</comment>
<comment type="subunit">
    <text evidence="1">Homohexamer; trimer of dimers.</text>
</comment>
<comment type="similarity">
    <text evidence="1">Belongs to the MoaC family.</text>
</comment>
<organism>
    <name type="scientific">Caulobacter vibrioides (strain NA1000 / CB15N)</name>
    <name type="common">Caulobacter crescentus</name>
    <dbReference type="NCBI Taxonomy" id="565050"/>
    <lineage>
        <taxon>Bacteria</taxon>
        <taxon>Pseudomonadati</taxon>
        <taxon>Pseudomonadota</taxon>
        <taxon>Alphaproteobacteria</taxon>
        <taxon>Caulobacterales</taxon>
        <taxon>Caulobacteraceae</taxon>
        <taxon>Caulobacter</taxon>
    </lineage>
</organism>
<protein>
    <recommendedName>
        <fullName evidence="1">Cyclic pyranopterin monophosphate synthase</fullName>
        <ecNumber evidence="1">4.6.1.17</ecNumber>
    </recommendedName>
    <alternativeName>
        <fullName evidence="1">Molybdenum cofactor biosynthesis protein C</fullName>
    </alternativeName>
</protein>
<proteinExistence type="inferred from homology"/>
<gene>
    <name evidence="1" type="primary">moaC</name>
    <name type="ordered locus">CCNA_00014</name>
</gene>
<evidence type="ECO:0000255" key="1">
    <source>
        <dbReference type="HAMAP-Rule" id="MF_01224"/>
    </source>
</evidence>
<name>MOAC_CAUVN</name>
<accession>B8GWX1</accession>
<feature type="chain" id="PRO_1000164883" description="Cyclic pyranopterin monophosphate synthase">
    <location>
        <begin position="1"/>
        <end position="158"/>
    </location>
</feature>
<feature type="active site" evidence="1">
    <location>
        <position position="126"/>
    </location>
</feature>
<feature type="binding site" evidence="1">
    <location>
        <begin position="75"/>
        <end position="77"/>
    </location>
    <ligand>
        <name>substrate</name>
    </ligand>
</feature>
<feature type="binding site" evidence="1">
    <location>
        <begin position="111"/>
        <end position="112"/>
    </location>
    <ligand>
        <name>substrate</name>
    </ligand>
</feature>
<keyword id="KW-0456">Lyase</keyword>
<keyword id="KW-0501">Molybdenum cofactor biosynthesis</keyword>
<keyword id="KW-1185">Reference proteome</keyword>
<sequence length="158" mass="16362">MSKLTHIDDQGRARMVDVSEKPATAREAVAAGFVRMSAETLALAISGSGRKGDVRAVAELAGVMAAKKTSDLIPLCHPLALSKVEVAVEPADGGLSVTARVKTTGPTGVEMEALTAASVACLTIYDMLKAAEKGMVIEAVRLLEKTGGKSGDWKADQP</sequence>
<dbReference type="EC" id="4.6.1.17" evidence="1"/>
<dbReference type="EMBL" id="CP001340">
    <property type="protein sequence ID" value="ACL93481.1"/>
    <property type="molecule type" value="Genomic_DNA"/>
</dbReference>
<dbReference type="RefSeq" id="WP_012639855.1">
    <property type="nucleotide sequence ID" value="NC_011916.1"/>
</dbReference>
<dbReference type="RefSeq" id="YP_002515389.1">
    <property type="nucleotide sequence ID" value="NC_011916.1"/>
</dbReference>
<dbReference type="SMR" id="B8GWX1"/>
<dbReference type="GeneID" id="7332104"/>
<dbReference type="KEGG" id="ccs:CCNA_00014"/>
<dbReference type="PATRIC" id="fig|565050.3.peg.15"/>
<dbReference type="HOGENOM" id="CLU_074693_1_1_5"/>
<dbReference type="OrthoDB" id="9794429at2"/>
<dbReference type="PhylomeDB" id="B8GWX1"/>
<dbReference type="UniPathway" id="UPA00344"/>
<dbReference type="Proteomes" id="UP000001364">
    <property type="component" value="Chromosome"/>
</dbReference>
<dbReference type="GO" id="GO:0061799">
    <property type="term" value="F:cyclic pyranopterin monophosphate synthase activity"/>
    <property type="evidence" value="ECO:0007669"/>
    <property type="project" value="UniProtKB-UniRule"/>
</dbReference>
<dbReference type="GO" id="GO:0006777">
    <property type="term" value="P:Mo-molybdopterin cofactor biosynthetic process"/>
    <property type="evidence" value="ECO:0007669"/>
    <property type="project" value="UniProtKB-UniRule"/>
</dbReference>
<dbReference type="CDD" id="cd01420">
    <property type="entry name" value="MoaC_PE"/>
    <property type="match status" value="1"/>
</dbReference>
<dbReference type="Gene3D" id="3.30.70.640">
    <property type="entry name" value="Molybdopterin cofactor biosynthesis C (MoaC) domain"/>
    <property type="match status" value="1"/>
</dbReference>
<dbReference type="HAMAP" id="MF_01224_B">
    <property type="entry name" value="MoaC_B"/>
    <property type="match status" value="1"/>
</dbReference>
<dbReference type="InterPro" id="IPR023045">
    <property type="entry name" value="MoaC"/>
</dbReference>
<dbReference type="InterPro" id="IPR047594">
    <property type="entry name" value="MoaC_bact/euk"/>
</dbReference>
<dbReference type="InterPro" id="IPR036522">
    <property type="entry name" value="MoaC_sf"/>
</dbReference>
<dbReference type="InterPro" id="IPR050105">
    <property type="entry name" value="MoCo_biosynth_MoaA/MoaC"/>
</dbReference>
<dbReference type="InterPro" id="IPR002820">
    <property type="entry name" value="Mopterin_CF_biosynth-C_dom"/>
</dbReference>
<dbReference type="NCBIfam" id="TIGR00581">
    <property type="entry name" value="moaC"/>
    <property type="match status" value="1"/>
</dbReference>
<dbReference type="NCBIfam" id="NF006870">
    <property type="entry name" value="PRK09364.1"/>
    <property type="match status" value="1"/>
</dbReference>
<dbReference type="PANTHER" id="PTHR22960:SF29">
    <property type="entry name" value="CYCLIC PYRANOPTERIN MONOPHOSPHATE SYNTHASE"/>
    <property type="match status" value="1"/>
</dbReference>
<dbReference type="PANTHER" id="PTHR22960">
    <property type="entry name" value="MOLYBDOPTERIN COFACTOR SYNTHESIS PROTEIN A"/>
    <property type="match status" value="1"/>
</dbReference>
<dbReference type="Pfam" id="PF01967">
    <property type="entry name" value="MoaC"/>
    <property type="match status" value="1"/>
</dbReference>
<dbReference type="SUPFAM" id="SSF55040">
    <property type="entry name" value="Molybdenum cofactor biosynthesis protein C, MoaC"/>
    <property type="match status" value="1"/>
</dbReference>